<gene>
    <name evidence="1" type="primary">tgtA</name>
    <name type="ordered locus">MmarC7_1632</name>
</gene>
<feature type="chain" id="PRO_1000088167" description="tRNA-guanine(15) transglycosylase">
    <location>
        <begin position="1"/>
        <end position="649"/>
    </location>
</feature>
<feature type="domain" description="PUA" evidence="1">
    <location>
        <begin position="573"/>
        <end position="648"/>
    </location>
</feature>
<feature type="active site" description="Nucleophile" evidence="1">
    <location>
        <position position="88"/>
    </location>
</feature>
<feature type="binding site" evidence="1">
    <location>
        <position position="123"/>
    </location>
    <ligand>
        <name>substrate</name>
    </ligand>
</feature>
<feature type="binding site" evidence="1">
    <location>
        <position position="194"/>
    </location>
    <ligand>
        <name>substrate</name>
    </ligand>
</feature>
<feature type="binding site" evidence="1">
    <location>
        <position position="280"/>
    </location>
    <ligand>
        <name>Zn(2+)</name>
        <dbReference type="ChEBI" id="CHEBI:29105"/>
    </ligand>
</feature>
<feature type="binding site" evidence="1">
    <location>
        <position position="282"/>
    </location>
    <ligand>
        <name>Zn(2+)</name>
        <dbReference type="ChEBI" id="CHEBI:29105"/>
    </ligand>
</feature>
<feature type="binding site" evidence="1">
    <location>
        <position position="285"/>
    </location>
    <ligand>
        <name>Zn(2+)</name>
        <dbReference type="ChEBI" id="CHEBI:29105"/>
    </ligand>
</feature>
<name>ATGT_METM7</name>
<organism>
    <name type="scientific">Methanococcus maripaludis (strain C7 / ATCC BAA-1331)</name>
    <dbReference type="NCBI Taxonomy" id="426368"/>
    <lineage>
        <taxon>Archaea</taxon>
        <taxon>Methanobacteriati</taxon>
        <taxon>Methanobacteriota</taxon>
        <taxon>Methanomada group</taxon>
        <taxon>Methanococci</taxon>
        <taxon>Methanococcales</taxon>
        <taxon>Methanococcaceae</taxon>
        <taxon>Methanococcus</taxon>
    </lineage>
</organism>
<comment type="function">
    <text evidence="1">Exchanges the guanine residue with 7-cyano-7-deazaguanine (preQ0) at position 15 in the dihydrouridine loop (D-loop) of archaeal tRNAs.</text>
</comment>
<comment type="catalytic activity">
    <reaction evidence="1">
        <text>guanosine(15) in tRNA + 7-cyano-7-deazaguanine = 7-cyano-7-carbaguanosine(15) in tRNA + guanine</text>
        <dbReference type="Rhea" id="RHEA:43164"/>
        <dbReference type="Rhea" id="RHEA-COMP:10371"/>
        <dbReference type="Rhea" id="RHEA-COMP:10372"/>
        <dbReference type="ChEBI" id="CHEBI:16235"/>
        <dbReference type="ChEBI" id="CHEBI:45075"/>
        <dbReference type="ChEBI" id="CHEBI:74269"/>
        <dbReference type="ChEBI" id="CHEBI:82850"/>
        <dbReference type="EC" id="2.4.2.48"/>
    </reaction>
</comment>
<comment type="cofactor">
    <cofactor evidence="1">
        <name>Zn(2+)</name>
        <dbReference type="ChEBI" id="CHEBI:29105"/>
    </cofactor>
    <text evidence="1">Binds 1 zinc ion per subunit.</text>
</comment>
<comment type="pathway">
    <text evidence="1">tRNA modification; archaeosine-tRNA biosynthesis.</text>
</comment>
<comment type="similarity">
    <text evidence="1">Belongs to the archaeosine tRNA-ribosyltransferase family.</text>
</comment>
<evidence type="ECO:0000255" key="1">
    <source>
        <dbReference type="HAMAP-Rule" id="MF_01634"/>
    </source>
</evidence>
<accession>A6VJR4</accession>
<dbReference type="EC" id="2.4.2.48" evidence="1"/>
<dbReference type="EMBL" id="CP000745">
    <property type="protein sequence ID" value="ABR66690.1"/>
    <property type="molecule type" value="Genomic_DNA"/>
</dbReference>
<dbReference type="SMR" id="A6VJR4"/>
<dbReference type="STRING" id="426368.MmarC7_1632"/>
<dbReference type="KEGG" id="mmz:MmarC7_1632"/>
<dbReference type="eggNOG" id="arCOG00989">
    <property type="taxonomic scope" value="Archaea"/>
</dbReference>
<dbReference type="eggNOG" id="arCOG00991">
    <property type="taxonomic scope" value="Archaea"/>
</dbReference>
<dbReference type="HOGENOM" id="CLU_030083_0_0_2"/>
<dbReference type="OrthoDB" id="6871at2157"/>
<dbReference type="UniPathway" id="UPA00393"/>
<dbReference type="GO" id="GO:0005737">
    <property type="term" value="C:cytoplasm"/>
    <property type="evidence" value="ECO:0007669"/>
    <property type="project" value="TreeGrafter"/>
</dbReference>
<dbReference type="GO" id="GO:0016763">
    <property type="term" value="F:pentosyltransferase activity"/>
    <property type="evidence" value="ECO:0007669"/>
    <property type="project" value="UniProtKB-UniRule"/>
</dbReference>
<dbReference type="GO" id="GO:0003723">
    <property type="term" value="F:RNA binding"/>
    <property type="evidence" value="ECO:0007669"/>
    <property type="project" value="InterPro"/>
</dbReference>
<dbReference type="GO" id="GO:0008270">
    <property type="term" value="F:zinc ion binding"/>
    <property type="evidence" value="ECO:0007669"/>
    <property type="project" value="UniProtKB-UniRule"/>
</dbReference>
<dbReference type="GO" id="GO:0002099">
    <property type="term" value="P:tRNA wobble guanine modification"/>
    <property type="evidence" value="ECO:0007669"/>
    <property type="project" value="TreeGrafter"/>
</dbReference>
<dbReference type="CDD" id="cd21149">
    <property type="entry name" value="PUA_archaeosine_TGT"/>
    <property type="match status" value="1"/>
</dbReference>
<dbReference type="Gene3D" id="3.90.1020.10">
    <property type="entry name" value="ArcTGT, C1 domain"/>
    <property type="match status" value="1"/>
</dbReference>
<dbReference type="Gene3D" id="3.10.450.90">
    <property type="entry name" value="ArcTGT, C2 domain"/>
    <property type="match status" value="1"/>
</dbReference>
<dbReference type="Gene3D" id="2.30.130.10">
    <property type="entry name" value="PUA domain"/>
    <property type="match status" value="1"/>
</dbReference>
<dbReference type="Gene3D" id="3.20.20.105">
    <property type="entry name" value="Queuine tRNA-ribosyltransferase-like"/>
    <property type="match status" value="1"/>
</dbReference>
<dbReference type="HAMAP" id="MF_01634">
    <property type="entry name" value="TgtA_arch"/>
    <property type="match status" value="1"/>
</dbReference>
<dbReference type="InterPro" id="IPR050076">
    <property type="entry name" value="ArchSynthase1/Queuine_TRR"/>
</dbReference>
<dbReference type="InterPro" id="IPR038370">
    <property type="entry name" value="ArcTGT_C1_sf"/>
</dbReference>
<dbReference type="InterPro" id="IPR002478">
    <property type="entry name" value="PUA"/>
</dbReference>
<dbReference type="InterPro" id="IPR015947">
    <property type="entry name" value="PUA-like_sf"/>
</dbReference>
<dbReference type="InterPro" id="IPR036974">
    <property type="entry name" value="PUA_sf"/>
</dbReference>
<dbReference type="InterPro" id="IPR036511">
    <property type="entry name" value="TGT-like_sf"/>
</dbReference>
<dbReference type="InterPro" id="IPR029402">
    <property type="entry name" value="TGT_C2"/>
</dbReference>
<dbReference type="InterPro" id="IPR038250">
    <property type="entry name" value="TGT_C2_sf"/>
</dbReference>
<dbReference type="InterPro" id="IPR004804">
    <property type="entry name" value="TgtA"/>
</dbReference>
<dbReference type="InterPro" id="IPR002616">
    <property type="entry name" value="tRNA_ribo_trans-like"/>
</dbReference>
<dbReference type="NCBIfam" id="TIGR00432">
    <property type="entry name" value="arcsn_tRNA_tgt"/>
    <property type="match status" value="1"/>
</dbReference>
<dbReference type="NCBIfam" id="TIGR00449">
    <property type="entry name" value="tgt_general"/>
    <property type="match status" value="1"/>
</dbReference>
<dbReference type="PANTHER" id="PTHR46499">
    <property type="entry name" value="QUEUINE TRNA-RIBOSYLTRANSFERASE"/>
    <property type="match status" value="1"/>
</dbReference>
<dbReference type="PANTHER" id="PTHR46499:SF1">
    <property type="entry name" value="QUEUINE TRNA-RIBOSYLTRANSFERASE"/>
    <property type="match status" value="1"/>
</dbReference>
<dbReference type="Pfam" id="PF01472">
    <property type="entry name" value="PUA"/>
    <property type="match status" value="1"/>
</dbReference>
<dbReference type="Pfam" id="PF01702">
    <property type="entry name" value="TGT"/>
    <property type="match status" value="1"/>
</dbReference>
<dbReference type="Pfam" id="PF14810">
    <property type="entry name" value="TGT_C2"/>
    <property type="match status" value="1"/>
</dbReference>
<dbReference type="SMART" id="SM00359">
    <property type="entry name" value="PUA"/>
    <property type="match status" value="1"/>
</dbReference>
<dbReference type="SUPFAM" id="SSF88802">
    <property type="entry name" value="Pre-PUA domain"/>
    <property type="match status" value="1"/>
</dbReference>
<dbReference type="SUPFAM" id="SSF88697">
    <property type="entry name" value="PUA domain-like"/>
    <property type="match status" value="1"/>
</dbReference>
<dbReference type="SUPFAM" id="SSF51713">
    <property type="entry name" value="tRNA-guanine transglycosylase"/>
    <property type="match status" value="1"/>
</dbReference>
<dbReference type="PROSITE" id="PS50890">
    <property type="entry name" value="PUA"/>
    <property type="match status" value="1"/>
</dbReference>
<reference key="1">
    <citation type="submission" date="2007-06" db="EMBL/GenBank/DDBJ databases">
        <title>Complete sequence of Methanococcus maripaludis C7.</title>
        <authorList>
            <consortium name="US DOE Joint Genome Institute"/>
            <person name="Copeland A."/>
            <person name="Lucas S."/>
            <person name="Lapidus A."/>
            <person name="Barry K."/>
            <person name="Glavina del Rio T."/>
            <person name="Dalin E."/>
            <person name="Tice H."/>
            <person name="Pitluck S."/>
            <person name="Clum A."/>
            <person name="Schmutz J."/>
            <person name="Larimer F."/>
            <person name="Land M."/>
            <person name="Hauser L."/>
            <person name="Kyrpides N."/>
            <person name="Anderson I."/>
            <person name="Sieprawska-Lupa M."/>
            <person name="Whitman W.B."/>
            <person name="Richardson P."/>
        </authorList>
    </citation>
    <scope>NUCLEOTIDE SEQUENCE [LARGE SCALE GENOMIC DNA]</scope>
    <source>
        <strain>C7 / ATCC BAA-1331</strain>
    </source>
</reference>
<protein>
    <recommendedName>
        <fullName evidence="1">tRNA-guanine(15) transglycosylase</fullName>
        <ecNumber evidence="1">2.4.2.48</ecNumber>
    </recommendedName>
    <alternativeName>
        <fullName evidence="1">7-cyano-7-deazaguanine tRNA-ribosyltransferase</fullName>
    </alternativeName>
    <alternativeName>
        <fullName evidence="1">Archaeal tRNA-guanine transglycosylase</fullName>
    </alternativeName>
</protein>
<sequence length="649" mass="74483">MFEIKARDAMGRLGSITINGKKIETPTIMPVIHPNPKKQTVSMDLINKMADVVITNSYITYTTPELREIAETKGIHELIDFKNVVVTDSGSFQLSVYGDVNVGPMEIIDFQEKIGVDVGTILDIPTGPDVSREKAESDLIETFKRAEDSIKRRKEMGYKLALNGTIQGSKYLDLRQKSAEVMGKMDFDIYPIGAVVPLMEDYRYREVAEVILNSKMHLPTNKPVHLFGCGHPMLFALSVALGCDLFDSAAYALYAKNGRYLTADGTLHLEDMKDLKSFPCTCKVCSEYTPKQLYNLEEKEKTRLLAEHNLYVTFEEIDRIKNAIKEGNLWELVEERCRSHPKLLNGLRVISKYMDFIEKHDPVSKKSGFFYTGYESMNRPEIYRHKQRLDRIQYDKIYVTSVSENTSKPYHENLSNVPCDVDVLIKDGVFGLVPLNIDTMYPLAQNEVPDLYDFEKKYNNEFVSEFKEKHSEKILDISTYNYYINHYGKKKECDKINPDVFRVGKMLEYQYGAKILDEELMEKVKTRRSKNTGRIRNLLLEKEVLFTLRANDNFLIPAKSGAELLHEKLEFPKYRIVIDSSVEEYARAGKSVYSKFVKDCDPELRPFEEVLVVNSDDELLAYGTTILNGRELMEFDYGVAVTLRGGLKK</sequence>
<keyword id="KW-0328">Glycosyltransferase</keyword>
<keyword id="KW-0479">Metal-binding</keyword>
<keyword id="KW-0808">Transferase</keyword>
<keyword id="KW-0819">tRNA processing</keyword>
<keyword id="KW-0862">Zinc</keyword>
<proteinExistence type="inferred from homology"/>